<name>RS8_CLOAB</name>
<gene>
    <name evidence="1" type="primary">rpsH</name>
    <name type="ordered locus">CA_C3119</name>
</gene>
<comment type="function">
    <text evidence="1">One of the primary rRNA binding proteins, it binds directly to 16S rRNA central domain where it helps coordinate assembly of the platform of the 30S subunit.</text>
</comment>
<comment type="subunit">
    <text evidence="1">Part of the 30S ribosomal subunit. Contacts proteins S5 and S12.</text>
</comment>
<comment type="similarity">
    <text evidence="1">Belongs to the universal ribosomal protein uS8 family.</text>
</comment>
<evidence type="ECO:0000255" key="1">
    <source>
        <dbReference type="HAMAP-Rule" id="MF_01302"/>
    </source>
</evidence>
<evidence type="ECO:0000305" key="2"/>
<dbReference type="EMBL" id="AE001437">
    <property type="protein sequence ID" value="AAK81058.1"/>
    <property type="molecule type" value="Genomic_DNA"/>
</dbReference>
<dbReference type="PIR" id="G97283">
    <property type="entry name" value="G97283"/>
</dbReference>
<dbReference type="RefSeq" id="NP_349718.1">
    <property type="nucleotide sequence ID" value="NC_003030.1"/>
</dbReference>
<dbReference type="RefSeq" id="WP_010966398.1">
    <property type="nucleotide sequence ID" value="NC_003030.1"/>
</dbReference>
<dbReference type="SMR" id="Q97EJ2"/>
<dbReference type="STRING" id="272562.CA_C3119"/>
<dbReference type="GeneID" id="44999606"/>
<dbReference type="KEGG" id="cac:CA_C3119"/>
<dbReference type="PATRIC" id="fig|272562.8.peg.3302"/>
<dbReference type="eggNOG" id="COG0096">
    <property type="taxonomic scope" value="Bacteria"/>
</dbReference>
<dbReference type="HOGENOM" id="CLU_098428_0_2_9"/>
<dbReference type="OrthoDB" id="9802617at2"/>
<dbReference type="Proteomes" id="UP000000814">
    <property type="component" value="Chromosome"/>
</dbReference>
<dbReference type="GO" id="GO:1990904">
    <property type="term" value="C:ribonucleoprotein complex"/>
    <property type="evidence" value="ECO:0007669"/>
    <property type="project" value="UniProtKB-KW"/>
</dbReference>
<dbReference type="GO" id="GO:0005840">
    <property type="term" value="C:ribosome"/>
    <property type="evidence" value="ECO:0007669"/>
    <property type="project" value="UniProtKB-KW"/>
</dbReference>
<dbReference type="GO" id="GO:0019843">
    <property type="term" value="F:rRNA binding"/>
    <property type="evidence" value="ECO:0007669"/>
    <property type="project" value="UniProtKB-UniRule"/>
</dbReference>
<dbReference type="GO" id="GO:0003735">
    <property type="term" value="F:structural constituent of ribosome"/>
    <property type="evidence" value="ECO:0007669"/>
    <property type="project" value="InterPro"/>
</dbReference>
<dbReference type="GO" id="GO:0006412">
    <property type="term" value="P:translation"/>
    <property type="evidence" value="ECO:0007669"/>
    <property type="project" value="UniProtKB-UniRule"/>
</dbReference>
<dbReference type="FunFam" id="3.30.1370.30:FF:000002">
    <property type="entry name" value="30S ribosomal protein S8"/>
    <property type="match status" value="1"/>
</dbReference>
<dbReference type="FunFam" id="3.30.1490.10:FF:000001">
    <property type="entry name" value="30S ribosomal protein S8"/>
    <property type="match status" value="1"/>
</dbReference>
<dbReference type="Gene3D" id="3.30.1370.30">
    <property type="match status" value="1"/>
</dbReference>
<dbReference type="Gene3D" id="3.30.1490.10">
    <property type="match status" value="1"/>
</dbReference>
<dbReference type="HAMAP" id="MF_01302_B">
    <property type="entry name" value="Ribosomal_uS8_B"/>
    <property type="match status" value="1"/>
</dbReference>
<dbReference type="InterPro" id="IPR000630">
    <property type="entry name" value="Ribosomal_uS8"/>
</dbReference>
<dbReference type="InterPro" id="IPR047863">
    <property type="entry name" value="Ribosomal_uS8_CS"/>
</dbReference>
<dbReference type="InterPro" id="IPR035987">
    <property type="entry name" value="Ribosomal_uS8_sf"/>
</dbReference>
<dbReference type="NCBIfam" id="NF001109">
    <property type="entry name" value="PRK00136.1"/>
    <property type="match status" value="1"/>
</dbReference>
<dbReference type="PANTHER" id="PTHR11758">
    <property type="entry name" value="40S RIBOSOMAL PROTEIN S15A"/>
    <property type="match status" value="1"/>
</dbReference>
<dbReference type="Pfam" id="PF00410">
    <property type="entry name" value="Ribosomal_S8"/>
    <property type="match status" value="1"/>
</dbReference>
<dbReference type="SUPFAM" id="SSF56047">
    <property type="entry name" value="Ribosomal protein S8"/>
    <property type="match status" value="1"/>
</dbReference>
<dbReference type="PROSITE" id="PS00053">
    <property type="entry name" value="RIBOSOMAL_S8"/>
    <property type="match status" value="1"/>
</dbReference>
<organism>
    <name type="scientific">Clostridium acetobutylicum (strain ATCC 824 / DSM 792 / JCM 1419 / IAM 19013 / LMG 5710 / NBRC 13948 / NRRL B-527 / VKM B-1787 / 2291 / W)</name>
    <dbReference type="NCBI Taxonomy" id="272562"/>
    <lineage>
        <taxon>Bacteria</taxon>
        <taxon>Bacillati</taxon>
        <taxon>Bacillota</taxon>
        <taxon>Clostridia</taxon>
        <taxon>Eubacteriales</taxon>
        <taxon>Clostridiaceae</taxon>
        <taxon>Clostridium</taxon>
    </lineage>
</organism>
<proteinExistence type="inferred from homology"/>
<reference key="1">
    <citation type="journal article" date="2001" name="J. Bacteriol.">
        <title>Genome sequence and comparative analysis of the solvent-producing bacterium Clostridium acetobutylicum.</title>
        <authorList>
            <person name="Noelling J."/>
            <person name="Breton G."/>
            <person name="Omelchenko M.V."/>
            <person name="Makarova K.S."/>
            <person name="Zeng Q."/>
            <person name="Gibson R."/>
            <person name="Lee H.M."/>
            <person name="Dubois J."/>
            <person name="Qiu D."/>
            <person name="Hitti J."/>
            <person name="Wolf Y.I."/>
            <person name="Tatusov R.L."/>
            <person name="Sabathe F."/>
            <person name="Doucette-Stamm L.A."/>
            <person name="Soucaille P."/>
            <person name="Daly M.J."/>
            <person name="Bennett G.N."/>
            <person name="Koonin E.V."/>
            <person name="Smith D.R."/>
        </authorList>
    </citation>
    <scope>NUCLEOTIDE SEQUENCE [LARGE SCALE GENOMIC DNA]</scope>
    <source>
        <strain>ATCC 824 / DSM 792 / JCM 1419 / IAM 19013 / LMG 5710 / NBRC 13948 / NRRL B-527 / VKM B-1787 / 2291 / W</strain>
    </source>
</reference>
<feature type="chain" id="PRO_0000126396" description="Small ribosomal subunit protein uS8">
    <location>
        <begin position="1"/>
        <end position="132"/>
    </location>
</feature>
<keyword id="KW-1185">Reference proteome</keyword>
<keyword id="KW-0687">Ribonucleoprotein</keyword>
<keyword id="KW-0689">Ribosomal protein</keyword>
<keyword id="KW-0694">RNA-binding</keyword>
<keyword id="KW-0699">rRNA-binding</keyword>
<protein>
    <recommendedName>
        <fullName evidence="1">Small ribosomal subunit protein uS8</fullName>
    </recommendedName>
    <alternativeName>
        <fullName evidence="2">30S ribosomal protein S8</fullName>
    </alternativeName>
</protein>
<sequence length="132" mass="14682">MVMTDPIADLLTRIRNANVVRHGVVELPSSKIKKAMANILLQEGYLKDIEEYNDGVVPMLRLSMKYGKGKERIVTGLKRISKPGLRVYCRKEEIPKVLNGLGIAIISTSKGIVTDKEARKLGLGGEVLCYVW</sequence>
<accession>Q97EJ2</accession>